<organism>
    <name type="scientific">Clostridium tetani (strain Massachusetts / E88)</name>
    <dbReference type="NCBI Taxonomy" id="212717"/>
    <lineage>
        <taxon>Bacteria</taxon>
        <taxon>Bacillati</taxon>
        <taxon>Bacillota</taxon>
        <taxon>Clostridia</taxon>
        <taxon>Eubacteriales</taxon>
        <taxon>Clostridiaceae</taxon>
        <taxon>Clostridium</taxon>
    </lineage>
</organism>
<accession>Q891J1</accession>
<dbReference type="EC" id="4.1.1.23" evidence="1"/>
<dbReference type="EMBL" id="AE015927">
    <property type="protein sequence ID" value="AAO36854.1"/>
    <property type="molecule type" value="Genomic_DNA"/>
</dbReference>
<dbReference type="RefSeq" id="WP_011100515.1">
    <property type="nucleotide sequence ID" value="NC_004557.1"/>
</dbReference>
<dbReference type="SMR" id="Q891J1"/>
<dbReference type="STRING" id="212717.CTC_02381"/>
<dbReference type="GeneID" id="24252722"/>
<dbReference type="KEGG" id="ctc:CTC_02381"/>
<dbReference type="HOGENOM" id="CLU_060704_1_1_9"/>
<dbReference type="OrthoDB" id="9808470at2"/>
<dbReference type="UniPathway" id="UPA00070">
    <property type="reaction ID" value="UER00120"/>
</dbReference>
<dbReference type="Proteomes" id="UP000001412">
    <property type="component" value="Chromosome"/>
</dbReference>
<dbReference type="GO" id="GO:0004590">
    <property type="term" value="F:orotidine-5'-phosphate decarboxylase activity"/>
    <property type="evidence" value="ECO:0007669"/>
    <property type="project" value="UniProtKB-UniRule"/>
</dbReference>
<dbReference type="GO" id="GO:0006207">
    <property type="term" value="P:'de novo' pyrimidine nucleobase biosynthetic process"/>
    <property type="evidence" value="ECO:0007669"/>
    <property type="project" value="InterPro"/>
</dbReference>
<dbReference type="GO" id="GO:0044205">
    <property type="term" value="P:'de novo' UMP biosynthetic process"/>
    <property type="evidence" value="ECO:0007669"/>
    <property type="project" value="UniProtKB-UniRule"/>
</dbReference>
<dbReference type="CDD" id="cd04725">
    <property type="entry name" value="OMP_decarboxylase_like"/>
    <property type="match status" value="1"/>
</dbReference>
<dbReference type="FunFam" id="3.20.20.70:FF:000246">
    <property type="entry name" value="Orotidine 5'-phosphate decarboxylase"/>
    <property type="match status" value="1"/>
</dbReference>
<dbReference type="Gene3D" id="3.20.20.70">
    <property type="entry name" value="Aldolase class I"/>
    <property type="match status" value="1"/>
</dbReference>
<dbReference type="HAMAP" id="MF_01215">
    <property type="entry name" value="OMPdecase_type2"/>
    <property type="match status" value="1"/>
</dbReference>
<dbReference type="InterPro" id="IPR013785">
    <property type="entry name" value="Aldolase_TIM"/>
</dbReference>
<dbReference type="InterPro" id="IPR011995">
    <property type="entry name" value="OMPdecase_type-2"/>
</dbReference>
<dbReference type="InterPro" id="IPR001754">
    <property type="entry name" value="OMPdeCOase_dom"/>
</dbReference>
<dbReference type="InterPro" id="IPR011060">
    <property type="entry name" value="RibuloseP-bd_barrel"/>
</dbReference>
<dbReference type="NCBIfam" id="TIGR02127">
    <property type="entry name" value="pyrF_sub2"/>
    <property type="match status" value="1"/>
</dbReference>
<dbReference type="PANTHER" id="PTHR43375">
    <property type="entry name" value="OROTIDINE 5'-PHOSPHATE DECARBOXYLASE"/>
    <property type="match status" value="1"/>
</dbReference>
<dbReference type="PANTHER" id="PTHR43375:SF1">
    <property type="entry name" value="OROTIDINE 5'-PHOSPHATE DECARBOXYLASE"/>
    <property type="match status" value="1"/>
</dbReference>
<dbReference type="Pfam" id="PF00215">
    <property type="entry name" value="OMPdecase"/>
    <property type="match status" value="1"/>
</dbReference>
<dbReference type="SMART" id="SM00934">
    <property type="entry name" value="OMPdecase"/>
    <property type="match status" value="1"/>
</dbReference>
<dbReference type="SUPFAM" id="SSF51366">
    <property type="entry name" value="Ribulose-phoshate binding barrel"/>
    <property type="match status" value="1"/>
</dbReference>
<gene>
    <name evidence="1" type="primary">pyrF</name>
    <name type="ordered locus">CTC_02381</name>
</gene>
<proteinExistence type="inferred from homology"/>
<keyword id="KW-0210">Decarboxylase</keyword>
<keyword id="KW-0456">Lyase</keyword>
<keyword id="KW-0665">Pyrimidine biosynthesis</keyword>
<keyword id="KW-1185">Reference proteome</keyword>
<comment type="catalytic activity">
    <reaction evidence="1">
        <text>orotidine 5'-phosphate + H(+) = UMP + CO2</text>
        <dbReference type="Rhea" id="RHEA:11596"/>
        <dbReference type="ChEBI" id="CHEBI:15378"/>
        <dbReference type="ChEBI" id="CHEBI:16526"/>
        <dbReference type="ChEBI" id="CHEBI:57538"/>
        <dbReference type="ChEBI" id="CHEBI:57865"/>
        <dbReference type="EC" id="4.1.1.23"/>
    </reaction>
</comment>
<comment type="pathway">
    <text evidence="1">Pyrimidine metabolism; UMP biosynthesis via de novo pathway; UMP from orotate: step 2/2.</text>
</comment>
<comment type="similarity">
    <text evidence="1">Belongs to the OMP decarboxylase family. Type 2 subfamily.</text>
</comment>
<evidence type="ECO:0000255" key="1">
    <source>
        <dbReference type="HAMAP-Rule" id="MF_01215"/>
    </source>
</evidence>
<sequence length="288" mass="32456">MMIDKLYKRVEKNGHVCAGLDTSLDYIPEYFKTKYFNEEDIIFNFNKEIIDATYDKVACFKIQIAYYEALGLKGLRAYKRTLDYIKESDGIVISDIKRGDISSTAKMYARAHFEGDFETDFITLSPYMGLDSIEPYFEYMKQKGKGVFVLVRTSNEGAKDIEFIESKDGNKVYEIIGKKLKNMGQDFLGNCGYSSIGGVVGCTHIDEAVKLRKDLGGMFFLIPGYGAQGGKAEDVALYLKNGNGGVVNSSRGILLAYKKQNDEKNFAKCSRNEVIRMRDDILQAINSK</sequence>
<feature type="chain" id="PRO_1000066467" description="Orotidine 5'-phosphate decarboxylase">
    <location>
        <begin position="1"/>
        <end position="288"/>
    </location>
</feature>
<feature type="active site" description="Proton donor" evidence="1">
    <location>
        <position position="97"/>
    </location>
</feature>
<name>PYRF_CLOTE</name>
<protein>
    <recommendedName>
        <fullName evidence="1">Orotidine 5'-phosphate decarboxylase</fullName>
        <ecNumber evidence="1">4.1.1.23</ecNumber>
    </recommendedName>
    <alternativeName>
        <fullName evidence="1">OMP decarboxylase</fullName>
        <shortName evidence="1">OMPDCase</shortName>
        <shortName evidence="1">OMPdecase</shortName>
    </alternativeName>
</protein>
<reference key="1">
    <citation type="journal article" date="2003" name="Proc. Natl. Acad. Sci. U.S.A.">
        <title>The genome sequence of Clostridium tetani, the causative agent of tetanus disease.</title>
        <authorList>
            <person name="Brueggemann H."/>
            <person name="Baeumer S."/>
            <person name="Fricke W.F."/>
            <person name="Wiezer A."/>
            <person name="Liesegang H."/>
            <person name="Decker I."/>
            <person name="Herzberg C."/>
            <person name="Martinez-Arias R."/>
            <person name="Merkl R."/>
            <person name="Henne A."/>
            <person name="Gottschalk G."/>
        </authorList>
    </citation>
    <scope>NUCLEOTIDE SEQUENCE [LARGE SCALE GENOMIC DNA]</scope>
    <source>
        <strain>Massachusetts / E88</strain>
    </source>
</reference>